<protein>
    <recommendedName>
        <fullName evidence="1">Enolase</fullName>
        <ecNumber evidence="1">4.2.1.11</ecNumber>
    </recommendedName>
    <alternativeName>
        <fullName evidence="1">2-phospho-D-glycerate hydro-lyase</fullName>
    </alternativeName>
    <alternativeName>
        <fullName evidence="1">2-phosphoglycerate dehydratase</fullName>
    </alternativeName>
</protein>
<dbReference type="EC" id="4.2.1.11" evidence="1"/>
<dbReference type="EMBL" id="CP001277">
    <property type="protein sequence ID" value="ACQ67494.1"/>
    <property type="molecule type" value="Genomic_DNA"/>
</dbReference>
<dbReference type="RefSeq" id="WP_015873314.1">
    <property type="nucleotide sequence ID" value="NC_012751.1"/>
</dbReference>
<dbReference type="SMR" id="C4K4K1"/>
<dbReference type="STRING" id="572265.HDEF_0766"/>
<dbReference type="GeneID" id="66260608"/>
<dbReference type="KEGG" id="hde:HDEF_0766"/>
<dbReference type="eggNOG" id="COG0148">
    <property type="taxonomic scope" value="Bacteria"/>
</dbReference>
<dbReference type="HOGENOM" id="CLU_031223_2_1_6"/>
<dbReference type="UniPathway" id="UPA00109">
    <property type="reaction ID" value="UER00187"/>
</dbReference>
<dbReference type="Proteomes" id="UP000002334">
    <property type="component" value="Chromosome"/>
</dbReference>
<dbReference type="GO" id="GO:0009986">
    <property type="term" value="C:cell surface"/>
    <property type="evidence" value="ECO:0007669"/>
    <property type="project" value="UniProtKB-SubCell"/>
</dbReference>
<dbReference type="GO" id="GO:0005576">
    <property type="term" value="C:extracellular region"/>
    <property type="evidence" value="ECO:0007669"/>
    <property type="project" value="UniProtKB-SubCell"/>
</dbReference>
<dbReference type="GO" id="GO:0000015">
    <property type="term" value="C:phosphopyruvate hydratase complex"/>
    <property type="evidence" value="ECO:0007669"/>
    <property type="project" value="InterPro"/>
</dbReference>
<dbReference type="GO" id="GO:0000287">
    <property type="term" value="F:magnesium ion binding"/>
    <property type="evidence" value="ECO:0007669"/>
    <property type="project" value="UniProtKB-UniRule"/>
</dbReference>
<dbReference type="GO" id="GO:0004634">
    <property type="term" value="F:phosphopyruvate hydratase activity"/>
    <property type="evidence" value="ECO:0007669"/>
    <property type="project" value="UniProtKB-UniRule"/>
</dbReference>
<dbReference type="GO" id="GO:0006096">
    <property type="term" value="P:glycolytic process"/>
    <property type="evidence" value="ECO:0007669"/>
    <property type="project" value="UniProtKB-UniRule"/>
</dbReference>
<dbReference type="CDD" id="cd03313">
    <property type="entry name" value="enolase"/>
    <property type="match status" value="1"/>
</dbReference>
<dbReference type="FunFam" id="3.20.20.120:FF:000001">
    <property type="entry name" value="Enolase"/>
    <property type="match status" value="1"/>
</dbReference>
<dbReference type="FunFam" id="3.30.390.10:FF:000001">
    <property type="entry name" value="Enolase"/>
    <property type="match status" value="1"/>
</dbReference>
<dbReference type="Gene3D" id="3.20.20.120">
    <property type="entry name" value="Enolase-like C-terminal domain"/>
    <property type="match status" value="1"/>
</dbReference>
<dbReference type="Gene3D" id="3.30.390.10">
    <property type="entry name" value="Enolase-like, N-terminal domain"/>
    <property type="match status" value="1"/>
</dbReference>
<dbReference type="HAMAP" id="MF_00318">
    <property type="entry name" value="Enolase"/>
    <property type="match status" value="1"/>
</dbReference>
<dbReference type="InterPro" id="IPR000941">
    <property type="entry name" value="Enolase"/>
</dbReference>
<dbReference type="InterPro" id="IPR036849">
    <property type="entry name" value="Enolase-like_C_sf"/>
</dbReference>
<dbReference type="InterPro" id="IPR029017">
    <property type="entry name" value="Enolase-like_N"/>
</dbReference>
<dbReference type="InterPro" id="IPR020810">
    <property type="entry name" value="Enolase_C"/>
</dbReference>
<dbReference type="InterPro" id="IPR020809">
    <property type="entry name" value="Enolase_CS"/>
</dbReference>
<dbReference type="InterPro" id="IPR020811">
    <property type="entry name" value="Enolase_N"/>
</dbReference>
<dbReference type="NCBIfam" id="TIGR01060">
    <property type="entry name" value="eno"/>
    <property type="match status" value="1"/>
</dbReference>
<dbReference type="PANTHER" id="PTHR11902">
    <property type="entry name" value="ENOLASE"/>
    <property type="match status" value="1"/>
</dbReference>
<dbReference type="PANTHER" id="PTHR11902:SF1">
    <property type="entry name" value="ENOLASE"/>
    <property type="match status" value="1"/>
</dbReference>
<dbReference type="Pfam" id="PF00113">
    <property type="entry name" value="Enolase_C"/>
    <property type="match status" value="1"/>
</dbReference>
<dbReference type="Pfam" id="PF03952">
    <property type="entry name" value="Enolase_N"/>
    <property type="match status" value="1"/>
</dbReference>
<dbReference type="PIRSF" id="PIRSF001400">
    <property type="entry name" value="Enolase"/>
    <property type="match status" value="1"/>
</dbReference>
<dbReference type="PRINTS" id="PR00148">
    <property type="entry name" value="ENOLASE"/>
</dbReference>
<dbReference type="SFLD" id="SFLDS00001">
    <property type="entry name" value="Enolase"/>
    <property type="match status" value="1"/>
</dbReference>
<dbReference type="SFLD" id="SFLDF00002">
    <property type="entry name" value="enolase"/>
    <property type="match status" value="1"/>
</dbReference>
<dbReference type="SMART" id="SM01192">
    <property type="entry name" value="Enolase_C"/>
    <property type="match status" value="1"/>
</dbReference>
<dbReference type="SMART" id="SM01193">
    <property type="entry name" value="Enolase_N"/>
    <property type="match status" value="1"/>
</dbReference>
<dbReference type="SUPFAM" id="SSF51604">
    <property type="entry name" value="Enolase C-terminal domain-like"/>
    <property type="match status" value="1"/>
</dbReference>
<dbReference type="SUPFAM" id="SSF54826">
    <property type="entry name" value="Enolase N-terminal domain-like"/>
    <property type="match status" value="1"/>
</dbReference>
<dbReference type="PROSITE" id="PS00164">
    <property type="entry name" value="ENOLASE"/>
    <property type="match status" value="1"/>
</dbReference>
<accession>C4K4K1</accession>
<proteinExistence type="inferred from homology"/>
<organism>
    <name type="scientific">Hamiltonella defensa subsp. Acyrthosiphon pisum (strain 5AT)</name>
    <dbReference type="NCBI Taxonomy" id="572265"/>
    <lineage>
        <taxon>Bacteria</taxon>
        <taxon>Pseudomonadati</taxon>
        <taxon>Pseudomonadota</taxon>
        <taxon>Gammaproteobacteria</taxon>
        <taxon>Enterobacterales</taxon>
        <taxon>Enterobacteriaceae</taxon>
        <taxon>aphid secondary symbionts</taxon>
        <taxon>Candidatus Hamiltonella</taxon>
    </lineage>
</organism>
<comment type="function">
    <text evidence="1">Catalyzes the reversible conversion of 2-phosphoglycerate (2-PG) into phosphoenolpyruvate (PEP). It is essential for the degradation of carbohydrates via glycolysis.</text>
</comment>
<comment type="catalytic activity">
    <reaction evidence="1">
        <text>(2R)-2-phosphoglycerate = phosphoenolpyruvate + H2O</text>
        <dbReference type="Rhea" id="RHEA:10164"/>
        <dbReference type="ChEBI" id="CHEBI:15377"/>
        <dbReference type="ChEBI" id="CHEBI:58289"/>
        <dbReference type="ChEBI" id="CHEBI:58702"/>
        <dbReference type="EC" id="4.2.1.11"/>
    </reaction>
</comment>
<comment type="cofactor">
    <cofactor evidence="1">
        <name>Mg(2+)</name>
        <dbReference type="ChEBI" id="CHEBI:18420"/>
    </cofactor>
    <text evidence="1">Binds a second Mg(2+) ion via substrate during catalysis.</text>
</comment>
<comment type="pathway">
    <text evidence="1">Carbohydrate degradation; glycolysis; pyruvate from D-glyceraldehyde 3-phosphate: step 4/5.</text>
</comment>
<comment type="subunit">
    <text evidence="1">Component of the RNA degradosome, a multiprotein complex involved in RNA processing and mRNA degradation.</text>
</comment>
<comment type="subcellular location">
    <subcellularLocation>
        <location evidence="1">Cytoplasm</location>
    </subcellularLocation>
    <subcellularLocation>
        <location evidence="1">Secreted</location>
    </subcellularLocation>
    <subcellularLocation>
        <location evidence="1">Cell surface</location>
    </subcellularLocation>
    <text evidence="1">Fractions of enolase are present in both the cytoplasm and on the cell surface.</text>
</comment>
<comment type="similarity">
    <text evidence="1">Belongs to the enolase family.</text>
</comment>
<reference key="1">
    <citation type="journal article" date="2009" name="Proc. Natl. Acad. Sci. U.S.A.">
        <title>Hamiltonella defensa, genome evolution of protective bacterial endosymbiont from pathogenic ancestors.</title>
        <authorList>
            <person name="Degnan P.H."/>
            <person name="Yu Y."/>
            <person name="Sisneros N."/>
            <person name="Wing R.A."/>
            <person name="Moran N.A."/>
        </authorList>
    </citation>
    <scope>NUCLEOTIDE SEQUENCE [LARGE SCALE GENOMIC DNA]</scope>
    <source>
        <strain>5AT</strain>
    </source>
</reference>
<sequence>MSKIAKILAREIIDSRGNPTVEVEAHLEGGFIGLAAAPSGASTGSREALELRDGNPARFLGKGVLKAVEAVNGSIAQALLGKDAKDQQHIDQLMIDLDGTENKSHFGANAILAVSLAVAKAGAASKGMPLYEHIAELHGTPGQFSMPLPMMNIINGGEHADNNIDIQEFMIQPVGAKSFKEAVRMGSEVFHHLAKVLKSKNLSTAVGDEGGYAPNLESNAAALETMKEAVEKAGYVLGKDITFAMDCAASEFYNKETNRYELKGEGKTFTSEEFTHFLENLTQKYPIISIEDGLDESDWEGFKYQTQVLGDKIQLVGDDLFVTNTQILKEGIQKKIANSILIKFNQIGSLTETLAAIKMAQEAGYTAIISHRSGETEDATIADLAVGTSAGQIKTGSMSRSDRVAKYNQLIRIEEALGERALFNGLKEVKGQS</sequence>
<gene>
    <name evidence="1" type="primary">eno</name>
    <name type="ordered locus">HDEF_0766</name>
</gene>
<evidence type="ECO:0000255" key="1">
    <source>
        <dbReference type="HAMAP-Rule" id="MF_00318"/>
    </source>
</evidence>
<name>ENO_HAMD5</name>
<keyword id="KW-0963">Cytoplasm</keyword>
<keyword id="KW-0324">Glycolysis</keyword>
<keyword id="KW-0456">Lyase</keyword>
<keyword id="KW-0460">Magnesium</keyword>
<keyword id="KW-0479">Metal-binding</keyword>
<keyword id="KW-0964">Secreted</keyword>
<feature type="chain" id="PRO_1000205098" description="Enolase">
    <location>
        <begin position="1"/>
        <end position="433"/>
    </location>
</feature>
<feature type="active site" description="Proton donor" evidence="1">
    <location>
        <position position="209"/>
    </location>
</feature>
<feature type="active site" description="Proton acceptor" evidence="1">
    <location>
        <position position="343"/>
    </location>
</feature>
<feature type="binding site" evidence="1">
    <location>
        <position position="167"/>
    </location>
    <ligand>
        <name>(2R)-2-phosphoglycerate</name>
        <dbReference type="ChEBI" id="CHEBI:58289"/>
    </ligand>
</feature>
<feature type="binding site" evidence="1">
    <location>
        <position position="246"/>
    </location>
    <ligand>
        <name>Mg(2+)</name>
        <dbReference type="ChEBI" id="CHEBI:18420"/>
    </ligand>
</feature>
<feature type="binding site" evidence="1">
    <location>
        <position position="291"/>
    </location>
    <ligand>
        <name>Mg(2+)</name>
        <dbReference type="ChEBI" id="CHEBI:18420"/>
    </ligand>
</feature>
<feature type="binding site" evidence="1">
    <location>
        <position position="318"/>
    </location>
    <ligand>
        <name>Mg(2+)</name>
        <dbReference type="ChEBI" id="CHEBI:18420"/>
    </ligand>
</feature>
<feature type="binding site" evidence="1">
    <location>
        <position position="343"/>
    </location>
    <ligand>
        <name>(2R)-2-phosphoglycerate</name>
        <dbReference type="ChEBI" id="CHEBI:58289"/>
    </ligand>
</feature>
<feature type="binding site" evidence="1">
    <location>
        <position position="372"/>
    </location>
    <ligand>
        <name>(2R)-2-phosphoglycerate</name>
        <dbReference type="ChEBI" id="CHEBI:58289"/>
    </ligand>
</feature>
<feature type="binding site" evidence="1">
    <location>
        <position position="373"/>
    </location>
    <ligand>
        <name>(2R)-2-phosphoglycerate</name>
        <dbReference type="ChEBI" id="CHEBI:58289"/>
    </ligand>
</feature>
<feature type="binding site" evidence="1">
    <location>
        <position position="394"/>
    </location>
    <ligand>
        <name>(2R)-2-phosphoglycerate</name>
        <dbReference type="ChEBI" id="CHEBI:58289"/>
    </ligand>
</feature>